<organism>
    <name type="scientific">Haemophilus influenzae (strain PittEE)</name>
    <dbReference type="NCBI Taxonomy" id="374930"/>
    <lineage>
        <taxon>Bacteria</taxon>
        <taxon>Pseudomonadati</taxon>
        <taxon>Pseudomonadota</taxon>
        <taxon>Gammaproteobacteria</taxon>
        <taxon>Pasteurellales</taxon>
        <taxon>Pasteurellaceae</taxon>
        <taxon>Haemophilus</taxon>
    </lineage>
</organism>
<accession>A5UDT6</accession>
<gene>
    <name evidence="1" type="primary">rplX</name>
    <name type="ordered locus">CGSHiEE_08120</name>
</gene>
<sequence length="103" mass="11273">MAAKIRQNDEVIVLTGKDKGKRGKVTKVLPNGKVFVEGINIITKHEKPVPALGKAGGLVKKEAAIEASNVAIFNPKTNKADRVGFRFEDGKKVRFFKSNNEII</sequence>
<name>RL24_HAEIE</name>
<reference key="1">
    <citation type="journal article" date="2007" name="Genome Biol.">
        <title>Characterization and modeling of the Haemophilus influenzae core and supragenomes based on the complete genomic sequences of Rd and 12 clinical nontypeable strains.</title>
        <authorList>
            <person name="Hogg J.S."/>
            <person name="Hu F.Z."/>
            <person name="Janto B."/>
            <person name="Boissy R."/>
            <person name="Hayes J."/>
            <person name="Keefe R."/>
            <person name="Post J.C."/>
            <person name="Ehrlich G.D."/>
        </authorList>
    </citation>
    <scope>NUCLEOTIDE SEQUENCE [LARGE SCALE GENOMIC DNA]</scope>
    <source>
        <strain>PittEE</strain>
    </source>
</reference>
<feature type="chain" id="PRO_1000052221" description="Large ribosomal subunit protein uL24">
    <location>
        <begin position="1"/>
        <end position="103"/>
    </location>
</feature>
<dbReference type="EMBL" id="CP000671">
    <property type="protein sequence ID" value="ABQ98937.1"/>
    <property type="molecule type" value="Genomic_DNA"/>
</dbReference>
<dbReference type="SMR" id="A5UDT6"/>
<dbReference type="KEGG" id="hip:CGSHiEE_08120"/>
<dbReference type="HOGENOM" id="CLU_093315_2_2_6"/>
<dbReference type="GO" id="GO:1990904">
    <property type="term" value="C:ribonucleoprotein complex"/>
    <property type="evidence" value="ECO:0007669"/>
    <property type="project" value="UniProtKB-KW"/>
</dbReference>
<dbReference type="GO" id="GO:0005840">
    <property type="term" value="C:ribosome"/>
    <property type="evidence" value="ECO:0007669"/>
    <property type="project" value="UniProtKB-KW"/>
</dbReference>
<dbReference type="GO" id="GO:0019843">
    <property type="term" value="F:rRNA binding"/>
    <property type="evidence" value="ECO:0007669"/>
    <property type="project" value="UniProtKB-UniRule"/>
</dbReference>
<dbReference type="GO" id="GO:0003735">
    <property type="term" value="F:structural constituent of ribosome"/>
    <property type="evidence" value="ECO:0007669"/>
    <property type="project" value="InterPro"/>
</dbReference>
<dbReference type="GO" id="GO:0006412">
    <property type="term" value="P:translation"/>
    <property type="evidence" value="ECO:0007669"/>
    <property type="project" value="UniProtKB-UniRule"/>
</dbReference>
<dbReference type="CDD" id="cd06089">
    <property type="entry name" value="KOW_RPL26"/>
    <property type="match status" value="1"/>
</dbReference>
<dbReference type="FunFam" id="2.30.30.30:FF:000004">
    <property type="entry name" value="50S ribosomal protein L24"/>
    <property type="match status" value="1"/>
</dbReference>
<dbReference type="Gene3D" id="2.30.30.30">
    <property type="match status" value="1"/>
</dbReference>
<dbReference type="HAMAP" id="MF_01326_B">
    <property type="entry name" value="Ribosomal_uL24_B"/>
    <property type="match status" value="1"/>
</dbReference>
<dbReference type="InterPro" id="IPR005824">
    <property type="entry name" value="KOW"/>
</dbReference>
<dbReference type="InterPro" id="IPR014722">
    <property type="entry name" value="Rib_uL2_dom2"/>
</dbReference>
<dbReference type="InterPro" id="IPR003256">
    <property type="entry name" value="Ribosomal_uL24"/>
</dbReference>
<dbReference type="InterPro" id="IPR005825">
    <property type="entry name" value="Ribosomal_uL24_CS"/>
</dbReference>
<dbReference type="InterPro" id="IPR041988">
    <property type="entry name" value="Ribosomal_uL24_KOW"/>
</dbReference>
<dbReference type="InterPro" id="IPR008991">
    <property type="entry name" value="Translation_prot_SH3-like_sf"/>
</dbReference>
<dbReference type="NCBIfam" id="TIGR01079">
    <property type="entry name" value="rplX_bact"/>
    <property type="match status" value="1"/>
</dbReference>
<dbReference type="PANTHER" id="PTHR12903">
    <property type="entry name" value="MITOCHONDRIAL RIBOSOMAL PROTEIN L24"/>
    <property type="match status" value="1"/>
</dbReference>
<dbReference type="Pfam" id="PF00467">
    <property type="entry name" value="KOW"/>
    <property type="match status" value="1"/>
</dbReference>
<dbReference type="Pfam" id="PF17136">
    <property type="entry name" value="ribosomal_L24"/>
    <property type="match status" value="1"/>
</dbReference>
<dbReference type="SMART" id="SM00739">
    <property type="entry name" value="KOW"/>
    <property type="match status" value="1"/>
</dbReference>
<dbReference type="SUPFAM" id="SSF50104">
    <property type="entry name" value="Translation proteins SH3-like domain"/>
    <property type="match status" value="1"/>
</dbReference>
<dbReference type="PROSITE" id="PS01108">
    <property type="entry name" value="RIBOSOMAL_L24"/>
    <property type="match status" value="1"/>
</dbReference>
<keyword id="KW-0687">Ribonucleoprotein</keyword>
<keyword id="KW-0689">Ribosomal protein</keyword>
<keyword id="KW-0694">RNA-binding</keyword>
<keyword id="KW-0699">rRNA-binding</keyword>
<proteinExistence type="inferred from homology"/>
<comment type="function">
    <text evidence="1">One of two assembly initiator proteins, it binds directly to the 5'-end of the 23S rRNA, where it nucleates assembly of the 50S subunit.</text>
</comment>
<comment type="function">
    <text evidence="1">One of the proteins that surrounds the polypeptide exit tunnel on the outside of the subunit.</text>
</comment>
<comment type="subunit">
    <text evidence="1">Part of the 50S ribosomal subunit.</text>
</comment>
<comment type="similarity">
    <text evidence="1">Belongs to the universal ribosomal protein uL24 family.</text>
</comment>
<evidence type="ECO:0000255" key="1">
    <source>
        <dbReference type="HAMAP-Rule" id="MF_01326"/>
    </source>
</evidence>
<evidence type="ECO:0000305" key="2"/>
<protein>
    <recommendedName>
        <fullName evidence="1">Large ribosomal subunit protein uL24</fullName>
    </recommendedName>
    <alternativeName>
        <fullName evidence="2">50S ribosomal protein L24</fullName>
    </alternativeName>
</protein>